<proteinExistence type="inferred from homology"/>
<evidence type="ECO:0000255" key="1">
    <source>
        <dbReference type="HAMAP-Rule" id="MF_01043"/>
    </source>
</evidence>
<evidence type="ECO:0000305" key="2"/>
<comment type="function">
    <text evidence="1">Catalyzes the transfer of an acyl group from acyl-phosphate (acyl-PO(4)) to glycerol-3-phosphate (G3P) to form lysophosphatidic acid (LPA). This enzyme utilizes acyl-phosphate as fatty acyl donor, but not acyl-CoA or acyl-ACP.</text>
</comment>
<comment type="catalytic activity">
    <reaction evidence="1">
        <text>an acyl phosphate + sn-glycerol 3-phosphate = a 1-acyl-sn-glycero-3-phosphate + phosphate</text>
        <dbReference type="Rhea" id="RHEA:34075"/>
        <dbReference type="ChEBI" id="CHEBI:43474"/>
        <dbReference type="ChEBI" id="CHEBI:57597"/>
        <dbReference type="ChEBI" id="CHEBI:57970"/>
        <dbReference type="ChEBI" id="CHEBI:59918"/>
        <dbReference type="EC" id="2.3.1.275"/>
    </reaction>
</comment>
<comment type="pathway">
    <text evidence="1">Lipid metabolism; phospholipid metabolism.</text>
</comment>
<comment type="subunit">
    <text evidence="1">Probably interacts with PlsX.</text>
</comment>
<comment type="subcellular location">
    <subcellularLocation>
        <location evidence="1">Cell membrane</location>
        <topology evidence="1">Multi-pass membrane protein</topology>
    </subcellularLocation>
</comment>
<comment type="similarity">
    <text evidence="1">Belongs to the PlsY family.</text>
</comment>
<comment type="sequence caution" evidence="2">
    <conflict type="erroneous initiation">
        <sequence resource="EMBL-CDS" id="ABF33833"/>
    </conflict>
</comment>
<keyword id="KW-1003">Cell membrane</keyword>
<keyword id="KW-0444">Lipid biosynthesis</keyword>
<keyword id="KW-0443">Lipid metabolism</keyword>
<keyword id="KW-0472">Membrane</keyword>
<keyword id="KW-0594">Phospholipid biosynthesis</keyword>
<keyword id="KW-1208">Phospholipid metabolism</keyword>
<keyword id="KW-0808">Transferase</keyword>
<keyword id="KW-0812">Transmembrane</keyword>
<keyword id="KW-1133">Transmembrane helix</keyword>
<sequence length="213" mass="23369">MKLLLFITIAYLLGSIPTGLWIGQYFYHINLREHGSGNTGTTNTFRILGVKAGTATLAIDMFKGTLSILLPIIFGMTSISSIAIGFFAVLGHTFPIFANFKGGKAVATSAGVLLGFAPLYLFFLASIFVLVLYLFSMISLASVVSAIVGVLSVLTFPAIHFLLPNYDYFLTFIVILLAFIIIIRHKDNISRIKHHTENLIPWGLNLSKQVPKK</sequence>
<dbReference type="EC" id="2.3.1.275" evidence="1"/>
<dbReference type="EMBL" id="CP000260">
    <property type="protein sequence ID" value="ABF33833.1"/>
    <property type="status" value="ALT_INIT"/>
    <property type="molecule type" value="Genomic_DNA"/>
</dbReference>
<dbReference type="RefSeq" id="WP_002984911.1">
    <property type="nucleotide sequence ID" value="NZ_CVUH01000002.1"/>
</dbReference>
<dbReference type="SMR" id="Q1JHA3"/>
<dbReference type="GeneID" id="69900991"/>
<dbReference type="KEGG" id="sph:MGAS10270_Spy0768"/>
<dbReference type="HOGENOM" id="CLU_081254_4_0_9"/>
<dbReference type="UniPathway" id="UPA00085"/>
<dbReference type="Proteomes" id="UP000002436">
    <property type="component" value="Chromosome"/>
</dbReference>
<dbReference type="GO" id="GO:0005886">
    <property type="term" value="C:plasma membrane"/>
    <property type="evidence" value="ECO:0007669"/>
    <property type="project" value="UniProtKB-SubCell"/>
</dbReference>
<dbReference type="GO" id="GO:0043772">
    <property type="term" value="F:acyl-phosphate glycerol-3-phosphate acyltransferase activity"/>
    <property type="evidence" value="ECO:0007669"/>
    <property type="project" value="UniProtKB-UniRule"/>
</dbReference>
<dbReference type="GO" id="GO:0008654">
    <property type="term" value="P:phospholipid biosynthetic process"/>
    <property type="evidence" value="ECO:0007669"/>
    <property type="project" value="UniProtKB-UniRule"/>
</dbReference>
<dbReference type="HAMAP" id="MF_01043">
    <property type="entry name" value="PlsY"/>
    <property type="match status" value="1"/>
</dbReference>
<dbReference type="InterPro" id="IPR003811">
    <property type="entry name" value="G3P_acylTferase_PlsY"/>
</dbReference>
<dbReference type="NCBIfam" id="TIGR00023">
    <property type="entry name" value="glycerol-3-phosphate 1-O-acyltransferase PlsY"/>
    <property type="match status" value="1"/>
</dbReference>
<dbReference type="PANTHER" id="PTHR30309:SF0">
    <property type="entry name" value="GLYCEROL-3-PHOSPHATE ACYLTRANSFERASE-RELATED"/>
    <property type="match status" value="1"/>
</dbReference>
<dbReference type="PANTHER" id="PTHR30309">
    <property type="entry name" value="INNER MEMBRANE PROTEIN YGIH"/>
    <property type="match status" value="1"/>
</dbReference>
<dbReference type="Pfam" id="PF02660">
    <property type="entry name" value="G3P_acyltransf"/>
    <property type="match status" value="1"/>
</dbReference>
<dbReference type="SMART" id="SM01207">
    <property type="entry name" value="G3P_acyltransf"/>
    <property type="match status" value="1"/>
</dbReference>
<accession>Q1JHA3</accession>
<name>PLSY_STRPD</name>
<feature type="chain" id="PRO_0000250337" description="Glycerol-3-phosphate acyltransferase">
    <location>
        <begin position="1"/>
        <end position="213"/>
    </location>
</feature>
<feature type="transmembrane region" description="Helical" evidence="1">
    <location>
        <begin position="3"/>
        <end position="23"/>
    </location>
</feature>
<feature type="transmembrane region" description="Helical" evidence="1">
    <location>
        <begin position="68"/>
        <end position="88"/>
    </location>
</feature>
<feature type="transmembrane region" description="Helical" evidence="1">
    <location>
        <begin position="112"/>
        <end position="132"/>
    </location>
</feature>
<feature type="transmembrane region" description="Helical" evidence="1">
    <location>
        <begin position="134"/>
        <end position="154"/>
    </location>
</feature>
<feature type="transmembrane region" description="Helical" evidence="1">
    <location>
        <begin position="163"/>
        <end position="183"/>
    </location>
</feature>
<organism>
    <name type="scientific">Streptococcus pyogenes serotype M2 (strain MGAS10270)</name>
    <dbReference type="NCBI Taxonomy" id="370552"/>
    <lineage>
        <taxon>Bacteria</taxon>
        <taxon>Bacillati</taxon>
        <taxon>Bacillota</taxon>
        <taxon>Bacilli</taxon>
        <taxon>Lactobacillales</taxon>
        <taxon>Streptococcaceae</taxon>
        <taxon>Streptococcus</taxon>
    </lineage>
</organism>
<protein>
    <recommendedName>
        <fullName evidence="1">Glycerol-3-phosphate acyltransferase</fullName>
    </recommendedName>
    <alternativeName>
        <fullName evidence="1">Acyl-PO4 G3P acyltransferase</fullName>
    </alternativeName>
    <alternativeName>
        <fullName evidence="1">Acyl-phosphate--glycerol-3-phosphate acyltransferase</fullName>
    </alternativeName>
    <alternativeName>
        <fullName evidence="1">G3P acyltransferase</fullName>
        <shortName evidence="1">GPAT</shortName>
        <ecNumber evidence="1">2.3.1.275</ecNumber>
    </alternativeName>
    <alternativeName>
        <fullName evidence="1">Lysophosphatidic acid synthase</fullName>
        <shortName evidence="1">LPA synthase</shortName>
    </alternativeName>
</protein>
<reference key="1">
    <citation type="journal article" date="2006" name="Proc. Natl. Acad. Sci. U.S.A.">
        <title>Molecular genetic anatomy of inter- and intraserotype variation in the human bacterial pathogen group A Streptococcus.</title>
        <authorList>
            <person name="Beres S.B."/>
            <person name="Richter E.W."/>
            <person name="Nagiec M.J."/>
            <person name="Sumby P."/>
            <person name="Porcella S.F."/>
            <person name="DeLeo F.R."/>
            <person name="Musser J.M."/>
        </authorList>
    </citation>
    <scope>NUCLEOTIDE SEQUENCE [LARGE SCALE GENOMIC DNA]</scope>
    <source>
        <strain>MGAS10270</strain>
    </source>
</reference>
<gene>
    <name evidence="1" type="primary">plsY</name>
    <name type="ordered locus">MGAS10270_Spy0768</name>
</gene>